<sequence length="754" mass="87174">MNEDLPKEYFELIRKALNEKEAEKAPLSRRRRVRRKNQPLPDAKKKFKTGLNELPRESVVTVNLDSSDDGVVTVPTDDSVEEIQSSEEDYDSEEFEDVTDGNEVAGVEDISVEIKPSSKRNSDARRTSRNVCSNEERKRRKYFHMLYLVCLMVHGFIRNEWINSKRLSRKLSNLVPEKVFELLHPQKDEELPLRSTRKLLDGLKKCMELWQKHWKITKKYDNVGLYMRTWKEIEMSANNKRKFKTLKRSDFLRAVSKGHGDPDISVQGFVAMLRACNVNARLIMSCQPPDFTNMKIDTSLNGNNAYKDMVKYPIFWCEVWDKFSKKWITVDPVNLKTIEQVRLHSKLAPKGVACCERNMLRYVIAYDRKYGCRDVTRRYAQWMNSKVRKRRITKDDFGEKWFRKVITALHHRKRTKIDDYEDQYFFQRDESEGIPDSVQDLKNHPYYVLEQDIKQTQIVKPGCKECGYLKVHGKVGKVLKVYAKRDIADLKSARQWYMNGRILKTGSRCKKVIKRTVGRPKGEAEEEDERLYSFEDTELYIPPLASASGEITKNTFGNIEVFAPTMIPGNCCLVENPVAIKAARFLGVEFAPAVTSFKFERGSTVKPVLSGIVVAKWLREAIETAIDGIEFIQEDDNRKEHLLGALESWNTLLLKLRIRSKLNSTYGKIAEEEPNVTKEQNIADNHDNTETFMGGGFLPGIANHEARPYSEPSEPEDSLDYVSVDKAEESATDDDVGEDYSDFMKELEMSEESD</sequence>
<feature type="chain" id="PRO_0000218298" description="DNA repair protein RAD4">
    <location>
        <begin position="1"/>
        <end position="754"/>
    </location>
</feature>
<feature type="DNA-binding region" evidence="1">
    <location>
        <begin position="250"/>
        <end position="269"/>
    </location>
</feature>
<feature type="region of interest" description="Disordered" evidence="2">
    <location>
        <begin position="23"/>
        <end position="51"/>
    </location>
</feature>
<feature type="region of interest" description="Disordered" evidence="2">
    <location>
        <begin position="701"/>
        <end position="754"/>
    </location>
</feature>
<feature type="compositionally biased region" description="Basic residues" evidence="2">
    <location>
        <begin position="27"/>
        <end position="37"/>
    </location>
</feature>
<feature type="compositionally biased region" description="Acidic residues" evidence="2">
    <location>
        <begin position="730"/>
        <end position="741"/>
    </location>
</feature>
<feature type="sequence conflict" description="In Ref. 3; AAB64689." evidence="5" ref="3">
    <original>V</original>
    <variation>E</variation>
    <location>
        <position position="223"/>
    </location>
</feature>
<feature type="sequence conflict" description="In Ref. 1; AAA34944 and 2; AAA34945." evidence="5" ref="1 2">
    <original>L</original>
    <variation>I</variation>
    <location>
        <position position="225"/>
    </location>
</feature>
<feature type="turn" evidence="6">
    <location>
        <begin position="91"/>
        <end position="94"/>
    </location>
</feature>
<feature type="helix" evidence="8">
    <location>
        <begin position="124"/>
        <end position="129"/>
    </location>
</feature>
<feature type="helix" evidence="7">
    <location>
        <begin position="134"/>
        <end position="162"/>
    </location>
</feature>
<feature type="helix" evidence="7">
    <location>
        <begin position="165"/>
        <end position="171"/>
    </location>
</feature>
<feature type="helix" evidence="7">
    <location>
        <begin position="172"/>
        <end position="174"/>
    </location>
</feature>
<feature type="helix" evidence="7">
    <location>
        <begin position="177"/>
        <end position="182"/>
    </location>
</feature>
<feature type="helix" evidence="7">
    <location>
        <begin position="193"/>
        <end position="213"/>
    </location>
</feature>
<feature type="strand" evidence="8">
    <location>
        <begin position="221"/>
        <end position="223"/>
    </location>
</feature>
<feature type="helix" evidence="7">
    <location>
        <begin position="230"/>
        <end position="235"/>
    </location>
</feature>
<feature type="turn" evidence="7">
    <location>
        <begin position="236"/>
        <end position="239"/>
    </location>
</feature>
<feature type="helix" evidence="7">
    <location>
        <begin position="248"/>
        <end position="257"/>
    </location>
</feature>
<feature type="helix" evidence="7">
    <location>
        <begin position="262"/>
        <end position="275"/>
    </location>
</feature>
<feature type="strand" evidence="7">
    <location>
        <begin position="280"/>
        <end position="286"/>
    </location>
</feature>
<feature type="strand" evidence="10">
    <location>
        <begin position="295"/>
        <end position="297"/>
    </location>
</feature>
<feature type="helix" evidence="7">
    <location>
        <begin position="306"/>
        <end position="309"/>
    </location>
</feature>
<feature type="strand" evidence="7">
    <location>
        <begin position="314"/>
        <end position="321"/>
    </location>
</feature>
<feature type="turn" evidence="7">
    <location>
        <begin position="322"/>
        <end position="325"/>
    </location>
</feature>
<feature type="strand" evidence="7">
    <location>
        <begin position="326"/>
        <end position="335"/>
    </location>
</feature>
<feature type="strand" evidence="7">
    <location>
        <begin position="337"/>
        <end position="339"/>
    </location>
</feature>
<feature type="turn" evidence="7">
    <location>
        <begin position="352"/>
        <end position="355"/>
    </location>
</feature>
<feature type="strand" evidence="7">
    <location>
        <begin position="362"/>
        <end position="366"/>
    </location>
</feature>
<feature type="strand" evidence="7">
    <location>
        <begin position="372"/>
        <end position="374"/>
    </location>
</feature>
<feature type="helix" evidence="7">
    <location>
        <begin position="376"/>
        <end position="379"/>
    </location>
</feature>
<feature type="helix" evidence="7">
    <location>
        <begin position="383"/>
        <end position="387"/>
    </location>
</feature>
<feature type="helix" evidence="7">
    <location>
        <begin position="388"/>
        <end position="390"/>
    </location>
</feature>
<feature type="helix" evidence="7">
    <location>
        <begin position="392"/>
        <end position="394"/>
    </location>
</feature>
<feature type="helix" evidence="7">
    <location>
        <begin position="396"/>
        <end position="409"/>
    </location>
</feature>
<feature type="helix" evidence="7">
    <location>
        <begin position="416"/>
        <end position="431"/>
    </location>
</feature>
<feature type="strand" evidence="8">
    <location>
        <begin position="436"/>
        <end position="438"/>
    </location>
</feature>
<feature type="helix" evidence="7">
    <location>
        <begin position="439"/>
        <end position="441"/>
    </location>
</feature>
<feature type="strand" evidence="7">
    <location>
        <begin position="445"/>
        <end position="449"/>
    </location>
</feature>
<feature type="helix" evidence="7">
    <location>
        <begin position="450"/>
        <end position="452"/>
    </location>
</feature>
<feature type="strand" evidence="7">
    <location>
        <begin position="457"/>
        <end position="459"/>
    </location>
</feature>
<feature type="strand" evidence="7">
    <location>
        <begin position="466"/>
        <end position="470"/>
    </location>
</feature>
<feature type="strand" evidence="7">
    <location>
        <begin position="478"/>
        <end position="483"/>
    </location>
</feature>
<feature type="helix" evidence="7">
    <location>
        <begin position="484"/>
        <end position="486"/>
    </location>
</feature>
<feature type="strand" evidence="7">
    <location>
        <begin position="487"/>
        <end position="489"/>
    </location>
</feature>
<feature type="helix" evidence="7">
    <location>
        <begin position="493"/>
        <end position="497"/>
    </location>
</feature>
<feature type="turn" evidence="7">
    <location>
        <begin position="498"/>
        <end position="500"/>
    </location>
</feature>
<feature type="strand" evidence="7">
    <location>
        <begin position="501"/>
        <end position="503"/>
    </location>
</feature>
<feature type="strand" evidence="7">
    <location>
        <begin position="510"/>
        <end position="513"/>
    </location>
</feature>
<feature type="strand" evidence="7">
    <location>
        <begin position="529"/>
        <end position="532"/>
    </location>
</feature>
<feature type="helix" evidence="7">
    <location>
        <begin position="534"/>
        <end position="536"/>
    </location>
</feature>
<feature type="strand" evidence="7">
    <location>
        <begin position="537"/>
        <end position="539"/>
    </location>
</feature>
<feature type="helix" evidence="7">
    <location>
        <begin position="564"/>
        <end position="566"/>
    </location>
</feature>
<feature type="strand" evidence="7">
    <location>
        <begin position="571"/>
        <end position="575"/>
    </location>
</feature>
<feature type="helix" evidence="7">
    <location>
        <begin position="579"/>
        <end position="585"/>
    </location>
</feature>
<feature type="strand" evidence="7">
    <location>
        <begin position="591"/>
        <end position="597"/>
    </location>
</feature>
<feature type="strand" evidence="9">
    <location>
        <begin position="601"/>
        <end position="603"/>
    </location>
</feature>
<feature type="strand" evidence="7">
    <location>
        <begin position="607"/>
        <end position="615"/>
    </location>
</feature>
<feature type="helix" evidence="8">
    <location>
        <begin position="616"/>
        <end position="618"/>
    </location>
</feature>
<feature type="helix" evidence="7">
    <location>
        <begin position="619"/>
        <end position="627"/>
    </location>
</feature>
<feature type="helix" evidence="7">
    <location>
        <begin position="629"/>
        <end position="631"/>
    </location>
</feature>
<gene>
    <name type="primary">RAD4</name>
    <name type="ordered locus">YER162C</name>
</gene>
<proteinExistence type="evidence at protein level"/>
<protein>
    <recommendedName>
        <fullName>DNA repair protein RAD4</fullName>
    </recommendedName>
</protein>
<name>RAD4_YEAST</name>
<comment type="function">
    <text>Involved in nucleotide excision repair of DNA damaged with UV light, bulky adducts, or cross-linking agents.</text>
</comment>
<comment type="interaction">
    <interactant intactId="EBI-14766">
        <id>P14736</id>
    </interactant>
    <interactant intactId="EBI-14668">
        <id>P32628</id>
        <label>RAD23</label>
    </interactant>
    <organismsDiffer>false</organismsDiffer>
    <experiments>9</experiments>
</comment>
<comment type="interaction">
    <interactant intactId="EBI-14766">
        <id>P14736</id>
    </interactant>
    <interactant intactId="EBI-17550">
        <id>P18888</id>
        <label>SNF6</label>
    </interactant>
    <organismsDiffer>false</organismsDiffer>
    <experiments>2</experiments>
</comment>
<comment type="subcellular location">
    <subcellularLocation>
        <location evidence="3">Cytoplasm</location>
    </subcellularLocation>
    <subcellularLocation>
        <location evidence="3">Nucleus</location>
    </subcellularLocation>
</comment>
<comment type="miscellaneous">
    <text evidence="4">Present with 876 molecules/cell in log phase SD medium.</text>
</comment>
<comment type="similarity">
    <text evidence="5">Belongs to the XPC family.</text>
</comment>
<dbReference type="EMBL" id="M26050">
    <property type="protein sequence ID" value="AAA34944.1"/>
    <property type="molecule type" value="Genomic_DNA"/>
</dbReference>
<dbReference type="EMBL" id="M24928">
    <property type="protein sequence ID" value="AAA34945.1"/>
    <property type="molecule type" value="Genomic_DNA"/>
</dbReference>
<dbReference type="EMBL" id="U18917">
    <property type="protein sequence ID" value="AAB64689.1"/>
    <property type="molecule type" value="Genomic_DNA"/>
</dbReference>
<dbReference type="EMBL" id="BK006939">
    <property type="protein sequence ID" value="DAA07824.2"/>
    <property type="molecule type" value="Genomic_DNA"/>
</dbReference>
<dbReference type="PIR" id="S30814">
    <property type="entry name" value="DDBYD4"/>
</dbReference>
<dbReference type="RefSeq" id="NP_011089.4">
    <property type="nucleotide sequence ID" value="NM_001179052.4"/>
</dbReference>
<dbReference type="PDB" id="2M14">
    <property type="method" value="NMR"/>
    <property type="chains" value="B=76-115"/>
</dbReference>
<dbReference type="PDB" id="2QSF">
    <property type="method" value="X-ray"/>
    <property type="resolution" value="2.35 A"/>
    <property type="chains" value="A=101-632"/>
</dbReference>
<dbReference type="PDB" id="2QSG">
    <property type="method" value="X-ray"/>
    <property type="resolution" value="3.10 A"/>
    <property type="chains" value="A=101-632"/>
</dbReference>
<dbReference type="PDB" id="2QSH">
    <property type="method" value="X-ray"/>
    <property type="resolution" value="2.81 A"/>
    <property type="chains" value="A=101-632"/>
</dbReference>
<dbReference type="PDB" id="4YIR">
    <property type="method" value="X-ray"/>
    <property type="resolution" value="3.05 A"/>
    <property type="chains" value="A=101-632"/>
</dbReference>
<dbReference type="PDB" id="6CFI">
    <property type="method" value="X-ray"/>
    <property type="resolution" value="3.36 A"/>
    <property type="chains" value="A=101-632"/>
</dbReference>
<dbReference type="PDB" id="6UBF">
    <property type="method" value="X-ray"/>
    <property type="resolution" value="4.60 A"/>
    <property type="chains" value="A=101-632"/>
</dbReference>
<dbReference type="PDB" id="6UG1">
    <property type="method" value="X-ray"/>
    <property type="resolution" value="2.83 A"/>
    <property type="chains" value="A=129-632"/>
</dbReference>
<dbReference type="PDB" id="6UIN">
    <property type="method" value="X-ray"/>
    <property type="resolution" value="3.35 A"/>
    <property type="chains" value="A=101-632"/>
</dbReference>
<dbReference type="PDB" id="7K04">
    <property type="method" value="EM"/>
    <property type="resolution" value="9.25 A"/>
    <property type="chains" value="A=1-754"/>
</dbReference>
<dbReference type="PDB" id="7M2U">
    <property type="method" value="EM"/>
    <property type="resolution" value="8.20 A"/>
    <property type="chains" value="A=1-754"/>
</dbReference>
<dbReference type="PDBsum" id="2M14"/>
<dbReference type="PDBsum" id="2QSF"/>
<dbReference type="PDBsum" id="2QSG"/>
<dbReference type="PDBsum" id="2QSH"/>
<dbReference type="PDBsum" id="4YIR"/>
<dbReference type="PDBsum" id="6CFI"/>
<dbReference type="PDBsum" id="6UBF"/>
<dbReference type="PDBsum" id="6UG1"/>
<dbReference type="PDBsum" id="6UIN"/>
<dbReference type="PDBsum" id="7K04"/>
<dbReference type="PDBsum" id="7M2U"/>
<dbReference type="BMRB" id="P14736"/>
<dbReference type="EMDB" id="EMD-22588"/>
<dbReference type="EMDB" id="EMD-6496"/>
<dbReference type="SMR" id="P14736"/>
<dbReference type="BioGRID" id="36915">
    <property type="interactions" value="451"/>
</dbReference>
<dbReference type="ComplexPortal" id="CPX-1640">
    <property type="entry name" value="Nucleotide excision repair factor 2 complex"/>
</dbReference>
<dbReference type="DIP" id="DIP-1547N"/>
<dbReference type="FunCoup" id="P14736">
    <property type="interactions" value="177"/>
</dbReference>
<dbReference type="IntAct" id="P14736">
    <property type="interactions" value="11"/>
</dbReference>
<dbReference type="MINT" id="P14736"/>
<dbReference type="STRING" id="4932.YER162C"/>
<dbReference type="iPTMnet" id="P14736"/>
<dbReference type="PaxDb" id="4932-YER162C"/>
<dbReference type="PeptideAtlas" id="P14736"/>
<dbReference type="EnsemblFungi" id="YER162C_mRNA">
    <property type="protein sequence ID" value="YER162C"/>
    <property type="gene ID" value="YER162C"/>
</dbReference>
<dbReference type="GeneID" id="856909"/>
<dbReference type="KEGG" id="sce:YER162C"/>
<dbReference type="AGR" id="SGD:S000000964"/>
<dbReference type="SGD" id="S000000964">
    <property type="gene designation" value="RAD4"/>
</dbReference>
<dbReference type="VEuPathDB" id="FungiDB:YER162C"/>
<dbReference type="eggNOG" id="KOG2179">
    <property type="taxonomic scope" value="Eukaryota"/>
</dbReference>
<dbReference type="GeneTree" id="ENSGT00390000005194"/>
<dbReference type="HOGENOM" id="CLU_003639_1_2_1"/>
<dbReference type="InParanoid" id="P14736"/>
<dbReference type="OMA" id="IPEWLMS"/>
<dbReference type="OrthoDB" id="300780at2759"/>
<dbReference type="BioCyc" id="YEAST:G3O-30323-MONOMER"/>
<dbReference type="BioGRID-ORCS" id="856909">
    <property type="hits" value="0 hits in 10 CRISPR screens"/>
</dbReference>
<dbReference type="EvolutionaryTrace" id="P14736"/>
<dbReference type="PRO" id="PR:P14736"/>
<dbReference type="Proteomes" id="UP000002311">
    <property type="component" value="Chromosome V"/>
</dbReference>
<dbReference type="RNAct" id="P14736">
    <property type="molecule type" value="protein"/>
</dbReference>
<dbReference type="GO" id="GO:0005737">
    <property type="term" value="C:cytoplasm"/>
    <property type="evidence" value="ECO:0000318"/>
    <property type="project" value="GO_Central"/>
</dbReference>
<dbReference type="GO" id="GO:0005829">
    <property type="term" value="C:cytosol"/>
    <property type="evidence" value="ECO:0000314"/>
    <property type="project" value="SGD"/>
</dbReference>
<dbReference type="GO" id="GO:0000111">
    <property type="term" value="C:nucleotide-excision repair factor 2 complex"/>
    <property type="evidence" value="ECO:0000314"/>
    <property type="project" value="SGD"/>
</dbReference>
<dbReference type="GO" id="GO:0005634">
    <property type="term" value="C:nucleus"/>
    <property type="evidence" value="ECO:0000314"/>
    <property type="project" value="SGD"/>
</dbReference>
<dbReference type="GO" id="GO:0071942">
    <property type="term" value="C:XPC complex"/>
    <property type="evidence" value="ECO:0000318"/>
    <property type="project" value="GO_Central"/>
</dbReference>
<dbReference type="GO" id="GO:0003684">
    <property type="term" value="F:damaged DNA binding"/>
    <property type="evidence" value="ECO:0000314"/>
    <property type="project" value="SGD"/>
</dbReference>
<dbReference type="GO" id="GO:1990165">
    <property type="term" value="F:single-strand break-containing DNA binding"/>
    <property type="evidence" value="ECO:0000314"/>
    <property type="project" value="SGD"/>
</dbReference>
<dbReference type="GO" id="GO:0003697">
    <property type="term" value="F:single-stranded DNA binding"/>
    <property type="evidence" value="ECO:0000318"/>
    <property type="project" value="GO_Central"/>
</dbReference>
<dbReference type="GO" id="GO:0006265">
    <property type="term" value="P:DNA topological change"/>
    <property type="evidence" value="ECO:0000314"/>
    <property type="project" value="SGD"/>
</dbReference>
<dbReference type="GO" id="GO:0006298">
    <property type="term" value="P:mismatch repair"/>
    <property type="evidence" value="ECO:0000318"/>
    <property type="project" value="GO_Central"/>
</dbReference>
<dbReference type="GO" id="GO:0000122">
    <property type="term" value="P:negative regulation of transcription by RNA polymerase II"/>
    <property type="evidence" value="ECO:0000315"/>
    <property type="project" value="SGD"/>
</dbReference>
<dbReference type="GO" id="GO:0006289">
    <property type="term" value="P:nucleotide-excision repair"/>
    <property type="evidence" value="ECO:0000315"/>
    <property type="project" value="SGD"/>
</dbReference>
<dbReference type="GO" id="GO:0000715">
    <property type="term" value="P:nucleotide-excision repair, DNA damage recognition"/>
    <property type="evidence" value="ECO:0000303"/>
    <property type="project" value="ComplexPortal"/>
</dbReference>
<dbReference type="GO" id="GO:0043161">
    <property type="term" value="P:proteasome-mediated ubiquitin-dependent protein catabolic process"/>
    <property type="evidence" value="ECO:0000315"/>
    <property type="project" value="SGD"/>
</dbReference>
<dbReference type="CDD" id="cd21393">
    <property type="entry name" value="sm_acid_XPC-like"/>
    <property type="match status" value="1"/>
</dbReference>
<dbReference type="DisProt" id="DP01628"/>
<dbReference type="FunFam" id="3.90.260.10:FF:000011">
    <property type="entry name" value="DNA repair protein RAD4"/>
    <property type="match status" value="1"/>
</dbReference>
<dbReference type="Gene3D" id="2.20.20.110">
    <property type="entry name" value="Rad4, beta-hairpin domain BHD1"/>
    <property type="match status" value="1"/>
</dbReference>
<dbReference type="Gene3D" id="3.30.60.290">
    <property type="entry name" value="Rad4, beta-hairpin domain BHD2"/>
    <property type="match status" value="1"/>
</dbReference>
<dbReference type="Gene3D" id="3.30.70.2460">
    <property type="entry name" value="Rad4, beta-hairpin domain BHD3"/>
    <property type="match status" value="1"/>
</dbReference>
<dbReference type="Gene3D" id="3.90.260.10">
    <property type="entry name" value="Transglutaminase-like"/>
    <property type="match status" value="1"/>
</dbReference>
<dbReference type="IDEAL" id="IID50167"/>
<dbReference type="InterPro" id="IPR018327">
    <property type="entry name" value="BHD_2"/>
</dbReference>
<dbReference type="InterPro" id="IPR004583">
    <property type="entry name" value="DNA_repair_Rad4"/>
</dbReference>
<dbReference type="InterPro" id="IPR018026">
    <property type="entry name" value="DNA_repair_Rad4-like"/>
</dbReference>
<dbReference type="InterPro" id="IPR038765">
    <property type="entry name" value="Papain-like_cys_pep_sf"/>
</dbReference>
<dbReference type="InterPro" id="IPR018325">
    <property type="entry name" value="Rad4/PNGase_transGLS-fold"/>
</dbReference>
<dbReference type="InterPro" id="IPR018326">
    <property type="entry name" value="Rad4_beta-hairpin_dom1"/>
</dbReference>
<dbReference type="InterPro" id="IPR018328">
    <property type="entry name" value="Rad4_beta-hairpin_dom3"/>
</dbReference>
<dbReference type="InterPro" id="IPR042488">
    <property type="entry name" value="Rad4_BHD3_sf"/>
</dbReference>
<dbReference type="InterPro" id="IPR036985">
    <property type="entry name" value="Transglutaminase-like_sf"/>
</dbReference>
<dbReference type="NCBIfam" id="TIGR00605">
    <property type="entry name" value="rad4"/>
    <property type="match status" value="1"/>
</dbReference>
<dbReference type="PANTHER" id="PTHR12135:SF0">
    <property type="entry name" value="DNA REPAIR PROTEIN COMPLEMENTING XP-C CELLS"/>
    <property type="match status" value="1"/>
</dbReference>
<dbReference type="PANTHER" id="PTHR12135">
    <property type="entry name" value="DNA REPAIR PROTEIN XP-C / RAD4"/>
    <property type="match status" value="1"/>
</dbReference>
<dbReference type="Pfam" id="PF10403">
    <property type="entry name" value="BHD_1"/>
    <property type="match status" value="1"/>
</dbReference>
<dbReference type="Pfam" id="PF10405">
    <property type="entry name" value="BHD_3"/>
    <property type="match status" value="1"/>
</dbReference>
<dbReference type="Pfam" id="PF03835">
    <property type="entry name" value="Rad4"/>
    <property type="match status" value="1"/>
</dbReference>
<dbReference type="SMART" id="SM01030">
    <property type="entry name" value="BHD_1"/>
    <property type="match status" value="1"/>
</dbReference>
<dbReference type="SMART" id="SM01031">
    <property type="entry name" value="BHD_2"/>
    <property type="match status" value="1"/>
</dbReference>
<dbReference type="SMART" id="SM01032">
    <property type="entry name" value="BHD_3"/>
    <property type="match status" value="1"/>
</dbReference>
<dbReference type="SUPFAM" id="SSF54001">
    <property type="entry name" value="Cysteine proteinases"/>
    <property type="match status" value="1"/>
</dbReference>
<accession>P14736</accession>
<accession>D3DM70</accession>
<reference key="1">
    <citation type="journal article" date="1988" name="Gene">
        <title>Cloning and nucleotide sequence analysis of the Saccharomyces cerevisiae RAD4 gene required for excision repair of UV-damaged DNA.</title>
        <authorList>
            <person name="Gietz R.D."/>
            <person name="Prakash S."/>
        </authorList>
    </citation>
    <scope>NUCLEOTIDE SEQUENCE [GENOMIC DNA]</scope>
</reference>
<reference key="2">
    <citation type="journal article" date="1989" name="J. Bacteriol.">
        <title>Nucleotide sequence of the wild-type RAD4 gene of Saccharomyces cerevisiae and characterization of mutant rad4 alleles.</title>
        <authorList>
            <person name="Couto L.B."/>
            <person name="Friedberg E.C."/>
        </authorList>
    </citation>
    <scope>NUCLEOTIDE SEQUENCE [GENOMIC DNA]</scope>
</reference>
<reference key="3">
    <citation type="journal article" date="1997" name="Nature">
        <title>The nucleotide sequence of Saccharomyces cerevisiae chromosome V.</title>
        <authorList>
            <person name="Dietrich F.S."/>
            <person name="Mulligan J.T."/>
            <person name="Hennessy K.M."/>
            <person name="Yelton M.A."/>
            <person name="Allen E."/>
            <person name="Araujo R."/>
            <person name="Aviles E."/>
            <person name="Berno A."/>
            <person name="Brennan T."/>
            <person name="Carpenter J."/>
            <person name="Chen E."/>
            <person name="Cherry J.M."/>
            <person name="Chung E."/>
            <person name="Duncan M."/>
            <person name="Guzman E."/>
            <person name="Hartzell G."/>
            <person name="Hunicke-Smith S."/>
            <person name="Hyman R.W."/>
            <person name="Kayser A."/>
            <person name="Komp C."/>
            <person name="Lashkari D."/>
            <person name="Lew H."/>
            <person name="Lin D."/>
            <person name="Mosedale D."/>
            <person name="Nakahara K."/>
            <person name="Namath A."/>
            <person name="Norgren R."/>
            <person name="Oefner P."/>
            <person name="Oh C."/>
            <person name="Petel F.X."/>
            <person name="Roberts D."/>
            <person name="Sehl P."/>
            <person name="Schramm S."/>
            <person name="Shogren T."/>
            <person name="Smith V."/>
            <person name="Taylor P."/>
            <person name="Wei Y."/>
            <person name="Botstein D."/>
            <person name="Davis R.W."/>
        </authorList>
    </citation>
    <scope>NUCLEOTIDE SEQUENCE [LARGE SCALE GENOMIC DNA]</scope>
    <source>
        <strain>ATCC 204508 / S288c</strain>
    </source>
</reference>
<reference key="4">
    <citation type="journal article" date="2014" name="G3 (Bethesda)">
        <title>The reference genome sequence of Saccharomyces cerevisiae: Then and now.</title>
        <authorList>
            <person name="Engel S.R."/>
            <person name="Dietrich F.S."/>
            <person name="Fisk D.G."/>
            <person name="Binkley G."/>
            <person name="Balakrishnan R."/>
            <person name="Costanzo M.C."/>
            <person name="Dwight S.S."/>
            <person name="Hitz B.C."/>
            <person name="Karra K."/>
            <person name="Nash R.S."/>
            <person name="Weng S."/>
            <person name="Wong E.D."/>
            <person name="Lloyd P."/>
            <person name="Skrzypek M.S."/>
            <person name="Miyasato S.R."/>
            <person name="Simison M."/>
            <person name="Cherry J.M."/>
        </authorList>
    </citation>
    <scope>GENOME REANNOTATION</scope>
    <scope>SEQUENCE REVISION TO 223</scope>
    <source>
        <strain>ATCC 204508 / S288c</strain>
    </source>
</reference>
<reference key="5">
    <citation type="journal article" date="2003" name="Nature">
        <title>Global analysis of protein localization in budding yeast.</title>
        <authorList>
            <person name="Huh W.-K."/>
            <person name="Falvo J.V."/>
            <person name="Gerke L.C."/>
            <person name="Carroll A.S."/>
            <person name="Howson R.W."/>
            <person name="Weissman J.S."/>
            <person name="O'Shea E.K."/>
        </authorList>
    </citation>
    <scope>SUBCELLULAR LOCATION [LARGE SCALE ANALYSIS]</scope>
</reference>
<reference key="6">
    <citation type="journal article" date="2003" name="Nature">
        <title>Global analysis of protein expression in yeast.</title>
        <authorList>
            <person name="Ghaemmaghami S."/>
            <person name="Huh W.-K."/>
            <person name="Bower K."/>
            <person name="Howson R.W."/>
            <person name="Belle A."/>
            <person name="Dephoure N."/>
            <person name="O'Shea E.K."/>
            <person name="Weissman J.S."/>
        </authorList>
    </citation>
    <scope>LEVEL OF PROTEIN EXPRESSION [LARGE SCALE ANALYSIS]</scope>
</reference>
<reference key="7">
    <citation type="journal article" date="2012" name="Proc. Natl. Acad. Sci. U.S.A.">
        <title>N-terminal acetylome analyses and functional insights of the N-terminal acetyltransferase NatB.</title>
        <authorList>
            <person name="Van Damme P."/>
            <person name="Lasa M."/>
            <person name="Polevoda B."/>
            <person name="Gazquez C."/>
            <person name="Elosegui-Artola A."/>
            <person name="Kim D.S."/>
            <person name="De Juan-Pardo E."/>
            <person name="Demeyer K."/>
            <person name="Hole K."/>
            <person name="Larrea E."/>
            <person name="Timmerman E."/>
            <person name="Prieto J."/>
            <person name="Arnesen T."/>
            <person name="Sherman F."/>
            <person name="Gevaert K."/>
            <person name="Aldabe R."/>
        </authorList>
    </citation>
    <scope>IDENTIFICATION BY MASS SPECTROMETRY [LARGE SCALE ANALYSIS]</scope>
</reference>
<organism>
    <name type="scientific">Saccharomyces cerevisiae (strain ATCC 204508 / S288c)</name>
    <name type="common">Baker's yeast</name>
    <dbReference type="NCBI Taxonomy" id="559292"/>
    <lineage>
        <taxon>Eukaryota</taxon>
        <taxon>Fungi</taxon>
        <taxon>Dikarya</taxon>
        <taxon>Ascomycota</taxon>
        <taxon>Saccharomycotina</taxon>
        <taxon>Saccharomycetes</taxon>
        <taxon>Saccharomycetales</taxon>
        <taxon>Saccharomycetaceae</taxon>
        <taxon>Saccharomyces</taxon>
    </lineage>
</organism>
<evidence type="ECO:0000255" key="1"/>
<evidence type="ECO:0000256" key="2">
    <source>
        <dbReference type="SAM" id="MobiDB-lite"/>
    </source>
</evidence>
<evidence type="ECO:0000269" key="3">
    <source>
    </source>
</evidence>
<evidence type="ECO:0000269" key="4">
    <source>
    </source>
</evidence>
<evidence type="ECO:0000305" key="5"/>
<evidence type="ECO:0007829" key="6">
    <source>
        <dbReference type="PDB" id="2M14"/>
    </source>
</evidence>
<evidence type="ECO:0007829" key="7">
    <source>
        <dbReference type="PDB" id="2QSF"/>
    </source>
</evidence>
<evidence type="ECO:0007829" key="8">
    <source>
        <dbReference type="PDB" id="2QSH"/>
    </source>
</evidence>
<evidence type="ECO:0007829" key="9">
    <source>
        <dbReference type="PDB" id="4YIR"/>
    </source>
</evidence>
<evidence type="ECO:0007829" key="10">
    <source>
        <dbReference type="PDB" id="6UIN"/>
    </source>
</evidence>
<keyword id="KW-0002">3D-structure</keyword>
<keyword id="KW-0963">Cytoplasm</keyword>
<keyword id="KW-0227">DNA damage</keyword>
<keyword id="KW-0234">DNA repair</keyword>
<keyword id="KW-0238">DNA-binding</keyword>
<keyword id="KW-0539">Nucleus</keyword>
<keyword id="KW-1185">Reference proteome</keyword>